<reference key="1">
    <citation type="journal article" date="2010" name="Genome Biol.">
        <title>Structure and dynamics of the pan-genome of Streptococcus pneumoniae and closely related species.</title>
        <authorList>
            <person name="Donati C."/>
            <person name="Hiller N.L."/>
            <person name="Tettelin H."/>
            <person name="Muzzi A."/>
            <person name="Croucher N.J."/>
            <person name="Angiuoli S.V."/>
            <person name="Oggioni M."/>
            <person name="Dunning Hotopp J.C."/>
            <person name="Hu F.Z."/>
            <person name="Riley D.R."/>
            <person name="Covacci A."/>
            <person name="Mitchell T.J."/>
            <person name="Bentley S.D."/>
            <person name="Kilian M."/>
            <person name="Ehrlich G.D."/>
            <person name="Rappuoli R."/>
            <person name="Moxon E.R."/>
            <person name="Masignani V."/>
        </authorList>
    </citation>
    <scope>NUCLEOTIDE SEQUENCE [LARGE SCALE GENOMIC DNA]</scope>
    <source>
        <strain>Hungary19A-6</strain>
    </source>
</reference>
<proteinExistence type="inferred from homology"/>
<sequence>MKKIAVDAMGGDYAPQAIVEGVNQALSDFSDIEVQLYGDEAKIKQYLTATERVSIIHTDEKIDSDDEPTRAIRNKKNASMVLAAKAVKDGEADAVLSAGNTGALLAAGFFIVGRIKNIDRPGLMSTLPTVDGKGFDMLDLGANAENTAQHLHQYAVLGSFYAKNVRGIAQPRVGLLNNGTESSKGDPLRKETYELLAADESLNFIGNVEARDLMNGVADVVVADGFTGNAVLKSIEGTAMGIMGLLKTAITGGGLRAKLGALLLKDSLRGLKKQLNYSDVGGAVLFGVKAPVVKTHGSSDAKAVYSTIRQIRTMLETDVVAQTAREFSGE</sequence>
<dbReference type="EC" id="2.3.1.274" evidence="1"/>
<dbReference type="EMBL" id="CP000936">
    <property type="protein sequence ID" value="ACA36074.1"/>
    <property type="molecule type" value="Genomic_DNA"/>
</dbReference>
<dbReference type="RefSeq" id="WP_000717456.1">
    <property type="nucleotide sequence ID" value="NC_010380.1"/>
</dbReference>
<dbReference type="SMR" id="B1I7I7"/>
<dbReference type="KEGG" id="spv:SPH_0137"/>
<dbReference type="HOGENOM" id="CLU_039379_1_1_9"/>
<dbReference type="UniPathway" id="UPA00085"/>
<dbReference type="Proteomes" id="UP000002163">
    <property type="component" value="Chromosome"/>
</dbReference>
<dbReference type="GO" id="GO:0005737">
    <property type="term" value="C:cytoplasm"/>
    <property type="evidence" value="ECO:0007669"/>
    <property type="project" value="UniProtKB-SubCell"/>
</dbReference>
<dbReference type="GO" id="GO:0043811">
    <property type="term" value="F:phosphate:acyl-[acyl carrier protein] acyltransferase activity"/>
    <property type="evidence" value="ECO:0007669"/>
    <property type="project" value="UniProtKB-UniRule"/>
</dbReference>
<dbReference type="GO" id="GO:0006633">
    <property type="term" value="P:fatty acid biosynthetic process"/>
    <property type="evidence" value="ECO:0007669"/>
    <property type="project" value="UniProtKB-UniRule"/>
</dbReference>
<dbReference type="GO" id="GO:0008654">
    <property type="term" value="P:phospholipid biosynthetic process"/>
    <property type="evidence" value="ECO:0007669"/>
    <property type="project" value="UniProtKB-KW"/>
</dbReference>
<dbReference type="Gene3D" id="3.40.718.10">
    <property type="entry name" value="Isopropylmalate Dehydrogenase"/>
    <property type="match status" value="1"/>
</dbReference>
<dbReference type="HAMAP" id="MF_00019">
    <property type="entry name" value="PlsX"/>
    <property type="match status" value="1"/>
</dbReference>
<dbReference type="InterPro" id="IPR003664">
    <property type="entry name" value="FA_synthesis"/>
</dbReference>
<dbReference type="InterPro" id="IPR012281">
    <property type="entry name" value="Phospholipid_synth_PlsX-like"/>
</dbReference>
<dbReference type="NCBIfam" id="TIGR00182">
    <property type="entry name" value="plsX"/>
    <property type="match status" value="1"/>
</dbReference>
<dbReference type="PANTHER" id="PTHR30100">
    <property type="entry name" value="FATTY ACID/PHOSPHOLIPID SYNTHESIS PROTEIN PLSX"/>
    <property type="match status" value="1"/>
</dbReference>
<dbReference type="PANTHER" id="PTHR30100:SF1">
    <property type="entry name" value="PHOSPHATE ACYLTRANSFERASE"/>
    <property type="match status" value="1"/>
</dbReference>
<dbReference type="Pfam" id="PF02504">
    <property type="entry name" value="FA_synthesis"/>
    <property type="match status" value="1"/>
</dbReference>
<dbReference type="PIRSF" id="PIRSF002465">
    <property type="entry name" value="Phsphlp_syn_PlsX"/>
    <property type="match status" value="1"/>
</dbReference>
<dbReference type="SUPFAM" id="SSF53659">
    <property type="entry name" value="Isocitrate/Isopropylmalate dehydrogenase-like"/>
    <property type="match status" value="1"/>
</dbReference>
<evidence type="ECO:0000255" key="1">
    <source>
        <dbReference type="HAMAP-Rule" id="MF_00019"/>
    </source>
</evidence>
<comment type="function">
    <text evidence="1">Catalyzes the reversible formation of acyl-phosphate (acyl-PO(4)) from acyl-[acyl-carrier-protein] (acyl-ACP). This enzyme utilizes acyl-ACP as fatty acyl donor, but not acyl-CoA.</text>
</comment>
<comment type="catalytic activity">
    <reaction evidence="1">
        <text>a fatty acyl-[ACP] + phosphate = an acyl phosphate + holo-[ACP]</text>
        <dbReference type="Rhea" id="RHEA:42292"/>
        <dbReference type="Rhea" id="RHEA-COMP:9685"/>
        <dbReference type="Rhea" id="RHEA-COMP:14125"/>
        <dbReference type="ChEBI" id="CHEBI:43474"/>
        <dbReference type="ChEBI" id="CHEBI:59918"/>
        <dbReference type="ChEBI" id="CHEBI:64479"/>
        <dbReference type="ChEBI" id="CHEBI:138651"/>
        <dbReference type="EC" id="2.3.1.274"/>
    </reaction>
</comment>
<comment type="pathway">
    <text evidence="1">Lipid metabolism; phospholipid metabolism.</text>
</comment>
<comment type="subunit">
    <text evidence="1">Homodimer. Probably interacts with PlsY.</text>
</comment>
<comment type="subcellular location">
    <subcellularLocation>
        <location evidence="1">Cytoplasm</location>
    </subcellularLocation>
    <text evidence="1">Associated with the membrane possibly through PlsY.</text>
</comment>
<comment type="similarity">
    <text evidence="1">Belongs to the PlsX family.</text>
</comment>
<accession>B1I7I7</accession>
<protein>
    <recommendedName>
        <fullName evidence="1">Phosphate acyltransferase</fullName>
        <ecNumber evidence="1">2.3.1.274</ecNumber>
    </recommendedName>
    <alternativeName>
        <fullName evidence="1">Acyl-ACP phosphotransacylase</fullName>
    </alternativeName>
    <alternativeName>
        <fullName evidence="1">Acyl-[acyl-carrier-protein]--phosphate acyltransferase</fullName>
    </alternativeName>
    <alternativeName>
        <fullName evidence="1">Phosphate-acyl-ACP acyltransferase</fullName>
    </alternativeName>
</protein>
<name>PLSX_STRPI</name>
<organism>
    <name type="scientific">Streptococcus pneumoniae (strain Hungary19A-6)</name>
    <dbReference type="NCBI Taxonomy" id="487214"/>
    <lineage>
        <taxon>Bacteria</taxon>
        <taxon>Bacillati</taxon>
        <taxon>Bacillota</taxon>
        <taxon>Bacilli</taxon>
        <taxon>Lactobacillales</taxon>
        <taxon>Streptococcaceae</taxon>
        <taxon>Streptococcus</taxon>
    </lineage>
</organism>
<feature type="chain" id="PRO_1000089942" description="Phosphate acyltransferase">
    <location>
        <begin position="1"/>
        <end position="330"/>
    </location>
</feature>
<gene>
    <name evidence="1" type="primary">plsX</name>
    <name type="ordered locus">SPH_0137</name>
</gene>
<keyword id="KW-0963">Cytoplasm</keyword>
<keyword id="KW-0444">Lipid biosynthesis</keyword>
<keyword id="KW-0443">Lipid metabolism</keyword>
<keyword id="KW-0594">Phospholipid biosynthesis</keyword>
<keyword id="KW-1208">Phospholipid metabolism</keyword>
<keyword id="KW-0808">Transferase</keyword>